<feature type="chain" id="PRO_0000316870" description="Dynein light chain Tctex-type protein 2B">
    <location>
        <begin position="1"/>
        <end position="144"/>
    </location>
</feature>
<reference key="1">
    <citation type="journal article" date="2005" name="Science">
        <title>The transcriptional landscape of the mammalian genome.</title>
        <authorList>
            <person name="Carninci P."/>
            <person name="Kasukawa T."/>
            <person name="Katayama S."/>
            <person name="Gough J."/>
            <person name="Frith M.C."/>
            <person name="Maeda N."/>
            <person name="Oyama R."/>
            <person name="Ravasi T."/>
            <person name="Lenhard B."/>
            <person name="Wells C."/>
            <person name="Kodzius R."/>
            <person name="Shimokawa K."/>
            <person name="Bajic V.B."/>
            <person name="Brenner S.E."/>
            <person name="Batalov S."/>
            <person name="Forrest A.R."/>
            <person name="Zavolan M."/>
            <person name="Davis M.J."/>
            <person name="Wilming L.G."/>
            <person name="Aidinis V."/>
            <person name="Allen J.E."/>
            <person name="Ambesi-Impiombato A."/>
            <person name="Apweiler R."/>
            <person name="Aturaliya R.N."/>
            <person name="Bailey T.L."/>
            <person name="Bansal M."/>
            <person name="Baxter L."/>
            <person name="Beisel K.W."/>
            <person name="Bersano T."/>
            <person name="Bono H."/>
            <person name="Chalk A.M."/>
            <person name="Chiu K.P."/>
            <person name="Choudhary V."/>
            <person name="Christoffels A."/>
            <person name="Clutterbuck D.R."/>
            <person name="Crowe M.L."/>
            <person name="Dalla E."/>
            <person name="Dalrymple B.P."/>
            <person name="de Bono B."/>
            <person name="Della Gatta G."/>
            <person name="di Bernardo D."/>
            <person name="Down T."/>
            <person name="Engstrom P."/>
            <person name="Fagiolini M."/>
            <person name="Faulkner G."/>
            <person name="Fletcher C.F."/>
            <person name="Fukushima T."/>
            <person name="Furuno M."/>
            <person name="Futaki S."/>
            <person name="Gariboldi M."/>
            <person name="Georgii-Hemming P."/>
            <person name="Gingeras T.R."/>
            <person name="Gojobori T."/>
            <person name="Green R.E."/>
            <person name="Gustincich S."/>
            <person name="Harbers M."/>
            <person name="Hayashi Y."/>
            <person name="Hensch T.K."/>
            <person name="Hirokawa N."/>
            <person name="Hill D."/>
            <person name="Huminiecki L."/>
            <person name="Iacono M."/>
            <person name="Ikeo K."/>
            <person name="Iwama A."/>
            <person name="Ishikawa T."/>
            <person name="Jakt M."/>
            <person name="Kanapin A."/>
            <person name="Katoh M."/>
            <person name="Kawasawa Y."/>
            <person name="Kelso J."/>
            <person name="Kitamura H."/>
            <person name="Kitano H."/>
            <person name="Kollias G."/>
            <person name="Krishnan S.P."/>
            <person name="Kruger A."/>
            <person name="Kummerfeld S.K."/>
            <person name="Kurochkin I.V."/>
            <person name="Lareau L.F."/>
            <person name="Lazarevic D."/>
            <person name="Lipovich L."/>
            <person name="Liu J."/>
            <person name="Liuni S."/>
            <person name="McWilliam S."/>
            <person name="Madan Babu M."/>
            <person name="Madera M."/>
            <person name="Marchionni L."/>
            <person name="Matsuda H."/>
            <person name="Matsuzawa S."/>
            <person name="Miki H."/>
            <person name="Mignone F."/>
            <person name="Miyake S."/>
            <person name="Morris K."/>
            <person name="Mottagui-Tabar S."/>
            <person name="Mulder N."/>
            <person name="Nakano N."/>
            <person name="Nakauchi H."/>
            <person name="Ng P."/>
            <person name="Nilsson R."/>
            <person name="Nishiguchi S."/>
            <person name="Nishikawa S."/>
            <person name="Nori F."/>
            <person name="Ohara O."/>
            <person name="Okazaki Y."/>
            <person name="Orlando V."/>
            <person name="Pang K.C."/>
            <person name="Pavan W.J."/>
            <person name="Pavesi G."/>
            <person name="Pesole G."/>
            <person name="Petrovsky N."/>
            <person name="Piazza S."/>
            <person name="Reed J."/>
            <person name="Reid J.F."/>
            <person name="Ring B.Z."/>
            <person name="Ringwald M."/>
            <person name="Rost B."/>
            <person name="Ruan Y."/>
            <person name="Salzberg S.L."/>
            <person name="Sandelin A."/>
            <person name="Schneider C."/>
            <person name="Schoenbach C."/>
            <person name="Sekiguchi K."/>
            <person name="Semple C.A."/>
            <person name="Seno S."/>
            <person name="Sessa L."/>
            <person name="Sheng Y."/>
            <person name="Shibata Y."/>
            <person name="Shimada H."/>
            <person name="Shimada K."/>
            <person name="Silva D."/>
            <person name="Sinclair B."/>
            <person name="Sperling S."/>
            <person name="Stupka E."/>
            <person name="Sugiura K."/>
            <person name="Sultana R."/>
            <person name="Takenaka Y."/>
            <person name="Taki K."/>
            <person name="Tammoja K."/>
            <person name="Tan S.L."/>
            <person name="Tang S."/>
            <person name="Taylor M.S."/>
            <person name="Tegner J."/>
            <person name="Teichmann S.A."/>
            <person name="Ueda H.R."/>
            <person name="van Nimwegen E."/>
            <person name="Verardo R."/>
            <person name="Wei C.L."/>
            <person name="Yagi K."/>
            <person name="Yamanishi H."/>
            <person name="Zabarovsky E."/>
            <person name="Zhu S."/>
            <person name="Zimmer A."/>
            <person name="Hide W."/>
            <person name="Bult C."/>
            <person name="Grimmond S.M."/>
            <person name="Teasdale R.D."/>
            <person name="Liu E.T."/>
            <person name="Brusic V."/>
            <person name="Quackenbush J."/>
            <person name="Wahlestedt C."/>
            <person name="Mattick J.S."/>
            <person name="Hume D.A."/>
            <person name="Kai C."/>
            <person name="Sasaki D."/>
            <person name="Tomaru Y."/>
            <person name="Fukuda S."/>
            <person name="Kanamori-Katayama M."/>
            <person name="Suzuki M."/>
            <person name="Aoki J."/>
            <person name="Arakawa T."/>
            <person name="Iida J."/>
            <person name="Imamura K."/>
            <person name="Itoh M."/>
            <person name="Kato T."/>
            <person name="Kawaji H."/>
            <person name="Kawagashira N."/>
            <person name="Kawashima T."/>
            <person name="Kojima M."/>
            <person name="Kondo S."/>
            <person name="Konno H."/>
            <person name="Nakano K."/>
            <person name="Ninomiya N."/>
            <person name="Nishio T."/>
            <person name="Okada M."/>
            <person name="Plessy C."/>
            <person name="Shibata K."/>
            <person name="Shiraki T."/>
            <person name="Suzuki S."/>
            <person name="Tagami M."/>
            <person name="Waki K."/>
            <person name="Watahiki A."/>
            <person name="Okamura-Oho Y."/>
            <person name="Suzuki H."/>
            <person name="Kawai J."/>
            <person name="Hayashizaki Y."/>
        </authorList>
    </citation>
    <scope>NUCLEOTIDE SEQUENCE [LARGE SCALE MRNA]</scope>
    <source>
        <strain>C57BL/6J</strain>
        <tissue>Kidney</tissue>
        <tissue>Testis</tissue>
        <tissue>Tongue</tissue>
    </source>
</reference>
<reference key="2">
    <citation type="journal article" date="2004" name="Genome Res.">
        <title>The status, quality, and expansion of the NIH full-length cDNA project: the Mammalian Gene Collection (MGC).</title>
        <authorList>
            <consortium name="The MGC Project Team"/>
        </authorList>
    </citation>
    <scope>NUCLEOTIDE SEQUENCE [LARGE SCALE MRNA]</scope>
    <source>
        <tissue>Testis</tissue>
    </source>
</reference>
<reference key="3">
    <citation type="journal article" date="2010" name="Cell">
        <title>A tissue-specific atlas of mouse protein phosphorylation and expression.</title>
        <authorList>
            <person name="Huttlin E.L."/>
            <person name="Jedrychowski M.P."/>
            <person name="Elias J.E."/>
            <person name="Goswami T."/>
            <person name="Rad R."/>
            <person name="Beausoleil S.A."/>
            <person name="Villen J."/>
            <person name="Haas W."/>
            <person name="Sowa M.E."/>
            <person name="Gygi S.P."/>
        </authorList>
    </citation>
    <scope>IDENTIFICATION BY MASS SPECTROMETRY [LARGE SCALE ANALYSIS]</scope>
    <source>
        <tissue>Testis</tissue>
    </source>
</reference>
<sequence length="144" mass="16499">MAVSFRGLSLSAHSEGLSEVDKNSGEPENTYILRPIFQQRFRPSVVKDCIHTVLKEELASAEYSPDEMPQLTKRLSEMIKDKLKELGYDRYKMVVQVVIGEQRGEGVFMAARCFWDADTDNYTHDVFMNDSLFCVVAAFGCFYY</sequence>
<evidence type="ECO:0000250" key="1">
    <source>
        <dbReference type="UniProtKB" id="Q8WW35"/>
    </source>
</evidence>
<evidence type="ECO:0000305" key="2"/>
<keyword id="KW-0963">Cytoplasm</keyword>
<keyword id="KW-1185">Reference proteome</keyword>
<protein>
    <recommendedName>
        <fullName evidence="2">Dynein light chain Tctex-type protein 2B</fullName>
    </recommendedName>
    <alternativeName>
        <fullName>Tctex1 domain-containing protein 2</fullName>
    </alternativeName>
</protein>
<dbReference type="EMBL" id="AK002589">
    <property type="protein sequence ID" value="BAB22210.1"/>
    <property type="molecule type" value="mRNA"/>
</dbReference>
<dbReference type="EMBL" id="AK007178">
    <property type="protein sequence ID" value="BAB24886.1"/>
    <property type="molecule type" value="mRNA"/>
</dbReference>
<dbReference type="EMBL" id="AK010027">
    <property type="protein sequence ID" value="BAB26652.1"/>
    <property type="molecule type" value="mRNA"/>
</dbReference>
<dbReference type="EMBL" id="BC059716">
    <property type="protein sequence ID" value="AAH59716.1"/>
    <property type="molecule type" value="mRNA"/>
</dbReference>
<dbReference type="CCDS" id="CCDS37312.1"/>
<dbReference type="RefSeq" id="NP_079605.1">
    <property type="nucleotide sequence ID" value="NM_025329.4"/>
</dbReference>
<dbReference type="SMR" id="Q9CQ66"/>
<dbReference type="FunCoup" id="Q9CQ66">
    <property type="interactions" value="228"/>
</dbReference>
<dbReference type="STRING" id="10090.ENSMUSP00000014220"/>
<dbReference type="iPTMnet" id="Q9CQ66"/>
<dbReference type="PhosphoSitePlus" id="Q9CQ66"/>
<dbReference type="PaxDb" id="10090-ENSMUSP00000014220"/>
<dbReference type="ProteomicsDB" id="263084"/>
<dbReference type="Pumba" id="Q9CQ66"/>
<dbReference type="DNASU" id="66061"/>
<dbReference type="Ensembl" id="ENSMUST00000014220.15">
    <property type="protein sequence ID" value="ENSMUSP00000014220.9"/>
    <property type="gene ID" value="ENSMUSG00000014075.16"/>
</dbReference>
<dbReference type="GeneID" id="66061"/>
<dbReference type="KEGG" id="mmu:66061"/>
<dbReference type="UCSC" id="uc007yyt.1">
    <property type="organism name" value="mouse"/>
</dbReference>
<dbReference type="AGR" id="MGI:1913311"/>
<dbReference type="CTD" id="255758"/>
<dbReference type="MGI" id="MGI:1913311">
    <property type="gene designation" value="Dynlt2b"/>
</dbReference>
<dbReference type="VEuPathDB" id="HostDB:ENSMUSG00000014075"/>
<dbReference type="eggNOG" id="KOG4108">
    <property type="taxonomic scope" value="Eukaryota"/>
</dbReference>
<dbReference type="GeneTree" id="ENSGT00940000160019"/>
<dbReference type="HOGENOM" id="CLU_097204_8_0_1"/>
<dbReference type="InParanoid" id="Q9CQ66"/>
<dbReference type="OMA" id="YVIRPNF"/>
<dbReference type="OrthoDB" id="10260741at2759"/>
<dbReference type="PhylomeDB" id="Q9CQ66"/>
<dbReference type="TreeFam" id="TF313904"/>
<dbReference type="Reactome" id="R-MMU-5620924">
    <property type="pathway name" value="Intraflagellar transport"/>
</dbReference>
<dbReference type="BioGRID-ORCS" id="66061">
    <property type="hits" value="2 hits in 76 CRISPR screens"/>
</dbReference>
<dbReference type="ChiTaRS" id="Tctex1d2">
    <property type="organism name" value="mouse"/>
</dbReference>
<dbReference type="PRO" id="PR:Q9CQ66"/>
<dbReference type="Proteomes" id="UP000000589">
    <property type="component" value="Chromosome 16"/>
</dbReference>
<dbReference type="RNAct" id="Q9CQ66">
    <property type="molecule type" value="protein"/>
</dbReference>
<dbReference type="Bgee" id="ENSMUSG00000014075">
    <property type="expression patterns" value="Expressed in seminiferous tubule of testis and 225 other cell types or tissues"/>
</dbReference>
<dbReference type="ExpressionAtlas" id="Q9CQ66">
    <property type="expression patterns" value="baseline and differential"/>
</dbReference>
<dbReference type="GO" id="GO:0005930">
    <property type="term" value="C:axoneme"/>
    <property type="evidence" value="ECO:0007669"/>
    <property type="project" value="Ensembl"/>
</dbReference>
<dbReference type="GO" id="GO:0005813">
    <property type="term" value="C:centrosome"/>
    <property type="evidence" value="ECO:0007669"/>
    <property type="project" value="Ensembl"/>
</dbReference>
<dbReference type="GO" id="GO:0097546">
    <property type="term" value="C:ciliary base"/>
    <property type="evidence" value="ECO:0007669"/>
    <property type="project" value="Ensembl"/>
</dbReference>
<dbReference type="GO" id="GO:0005868">
    <property type="term" value="C:cytoplasmic dynein complex"/>
    <property type="evidence" value="ECO:0007669"/>
    <property type="project" value="Ensembl"/>
</dbReference>
<dbReference type="GO" id="GO:0120293">
    <property type="term" value="C:dynein axonemal particle"/>
    <property type="evidence" value="ECO:0007669"/>
    <property type="project" value="UniProtKB-SubCell"/>
</dbReference>
<dbReference type="GO" id="GO:0031021">
    <property type="term" value="C:interphase microtubule organizing center"/>
    <property type="evidence" value="ECO:0007669"/>
    <property type="project" value="Ensembl"/>
</dbReference>
<dbReference type="GO" id="GO:0000922">
    <property type="term" value="C:spindle pole"/>
    <property type="evidence" value="ECO:0007669"/>
    <property type="project" value="Ensembl"/>
</dbReference>
<dbReference type="GO" id="GO:0045505">
    <property type="term" value="F:dynein intermediate chain binding"/>
    <property type="evidence" value="ECO:0007669"/>
    <property type="project" value="Ensembl"/>
</dbReference>
<dbReference type="GO" id="GO:0060271">
    <property type="term" value="P:cilium assembly"/>
    <property type="evidence" value="ECO:0007669"/>
    <property type="project" value="Ensembl"/>
</dbReference>
<dbReference type="GO" id="GO:0035721">
    <property type="term" value="P:intraciliary retrograde transport"/>
    <property type="evidence" value="ECO:0000250"/>
    <property type="project" value="UniProtKB"/>
</dbReference>
<dbReference type="GO" id="GO:1902017">
    <property type="term" value="P:regulation of cilium assembly"/>
    <property type="evidence" value="ECO:0007669"/>
    <property type="project" value="Ensembl"/>
</dbReference>
<dbReference type="GO" id="GO:1905799">
    <property type="term" value="P:regulation of intraciliary retrograde transport"/>
    <property type="evidence" value="ECO:0000250"/>
    <property type="project" value="UniProtKB"/>
</dbReference>
<dbReference type="CDD" id="cd21459">
    <property type="entry name" value="DLC-like_TCTEX1D2"/>
    <property type="match status" value="1"/>
</dbReference>
<dbReference type="FunFam" id="3.30.1140.40:FF:000003">
    <property type="entry name" value="tctex1 domain-containing protein 2"/>
    <property type="match status" value="1"/>
</dbReference>
<dbReference type="Gene3D" id="3.30.1140.40">
    <property type="entry name" value="Tctex-1"/>
    <property type="match status" value="1"/>
</dbReference>
<dbReference type="InterPro" id="IPR005334">
    <property type="entry name" value="Tctex-1-like"/>
</dbReference>
<dbReference type="InterPro" id="IPR038586">
    <property type="entry name" value="Tctex-1-like_sf"/>
</dbReference>
<dbReference type="PANTHER" id="PTHR21255:SF7">
    <property type="entry name" value="DYNEIN LIGHT CHAIN TCTEX-TYPE PROTEIN 2B"/>
    <property type="match status" value="1"/>
</dbReference>
<dbReference type="PANTHER" id="PTHR21255">
    <property type="entry name" value="T-COMPLEX-ASSOCIATED-TESTIS-EXPRESSED 1/ DYNEIN LIGHT CHAIN"/>
    <property type="match status" value="1"/>
</dbReference>
<dbReference type="Pfam" id="PF03645">
    <property type="entry name" value="Tctex-1"/>
    <property type="match status" value="1"/>
</dbReference>
<proteinExistence type="evidence at protein level"/>
<comment type="function">
    <text evidence="1">Acts as one of several non-catalytic accessory components of the cytoplasmic dynein 2 complex (dynein-2 complex), a motor protein complex that drives the movement of cargos along microtubules within cilia and flagella in concert with the intraflagellar transport (IFT) system. Required for proper retrograde ciliary transport.</text>
</comment>
<comment type="subunit">
    <text evidence="1">Light chain of the cytoplasmic dynein complex 2, a multisubunit complex composed at least of eleven different proteins. The cytoplasmic dynein 2 complex consists of two catalytic heavy chains (HCs) and a number of non-catalytic subunits presented by intermediate chains (ICs), light intermediate chains (LICs) and light chains (LCs). Among them, a heavy chain (DYNC2H1), two intermediate chains (DYNC2I2 and DYNC2I1), a light intermediate chain (DYNC2LI1), and a light chain (DYNLT2B) are unique to the dynein-2 complex, but a subset of the light chains are also shared by dynein-1 and dynein-2 complexes. The dimer DYNLT2B-DYNLT1/DYNLT3 interacts with DYNC2I1; this interaction is crucial for retrograde trafficking of ciliary proteins.</text>
</comment>
<comment type="subcellular location">
    <subcellularLocation>
        <location evidence="1">Dynein axonemal particle</location>
    </subcellularLocation>
</comment>
<comment type="similarity">
    <text evidence="2">Belongs to the dynein light chain Tctex-type family.</text>
</comment>
<accession>Q9CQ66</accession>
<name>DYT2B_MOUSE</name>
<gene>
    <name type="primary">Dynlt2b</name>
    <name type="synonym">Tctex1d2</name>
</gene>
<organism>
    <name type="scientific">Mus musculus</name>
    <name type="common">Mouse</name>
    <dbReference type="NCBI Taxonomy" id="10090"/>
    <lineage>
        <taxon>Eukaryota</taxon>
        <taxon>Metazoa</taxon>
        <taxon>Chordata</taxon>
        <taxon>Craniata</taxon>
        <taxon>Vertebrata</taxon>
        <taxon>Euteleostomi</taxon>
        <taxon>Mammalia</taxon>
        <taxon>Eutheria</taxon>
        <taxon>Euarchontoglires</taxon>
        <taxon>Glires</taxon>
        <taxon>Rodentia</taxon>
        <taxon>Myomorpha</taxon>
        <taxon>Muroidea</taxon>
        <taxon>Muridae</taxon>
        <taxon>Murinae</taxon>
        <taxon>Mus</taxon>
        <taxon>Mus</taxon>
    </lineage>
</organism>